<sequence>MLSDKLKDKIGNYQDFPTTGILFRDITPILRDQKLFSELIEKMSESDILKKADCLVAIDARGFIFGSSIALNLSKPFILARKPGKLPGELIQSSYKLEYGENSLVFQLDSLKNFKSFGIIDDLLATGGTVNAVANLLNQKNKIITGLSVVVELTELNARSNFNFEVSSEVKY</sequence>
<organism>
    <name type="scientific">Prochlorococcus marinus (strain MIT 9215)</name>
    <dbReference type="NCBI Taxonomy" id="93060"/>
    <lineage>
        <taxon>Bacteria</taxon>
        <taxon>Bacillati</taxon>
        <taxon>Cyanobacteriota</taxon>
        <taxon>Cyanophyceae</taxon>
        <taxon>Synechococcales</taxon>
        <taxon>Prochlorococcaceae</taxon>
        <taxon>Prochlorococcus</taxon>
    </lineage>
</organism>
<accession>A8G657</accession>
<comment type="function">
    <text evidence="1">Catalyzes a salvage reaction resulting in the formation of AMP, that is energically less costly than de novo synthesis.</text>
</comment>
<comment type="catalytic activity">
    <reaction evidence="1">
        <text>AMP + diphosphate = 5-phospho-alpha-D-ribose 1-diphosphate + adenine</text>
        <dbReference type="Rhea" id="RHEA:16609"/>
        <dbReference type="ChEBI" id="CHEBI:16708"/>
        <dbReference type="ChEBI" id="CHEBI:33019"/>
        <dbReference type="ChEBI" id="CHEBI:58017"/>
        <dbReference type="ChEBI" id="CHEBI:456215"/>
        <dbReference type="EC" id="2.4.2.7"/>
    </reaction>
</comment>
<comment type="pathway">
    <text evidence="1">Purine metabolism; AMP biosynthesis via salvage pathway; AMP from adenine: step 1/1.</text>
</comment>
<comment type="subunit">
    <text evidence="1">Homodimer.</text>
</comment>
<comment type="subcellular location">
    <subcellularLocation>
        <location evidence="1">Cytoplasm</location>
    </subcellularLocation>
</comment>
<comment type="similarity">
    <text evidence="1">Belongs to the purine/pyrimidine phosphoribosyltransferase family.</text>
</comment>
<keyword id="KW-0963">Cytoplasm</keyword>
<keyword id="KW-0328">Glycosyltransferase</keyword>
<keyword id="KW-0660">Purine salvage</keyword>
<keyword id="KW-0808">Transferase</keyword>
<name>APT_PROM2</name>
<feature type="chain" id="PRO_1000057034" description="Adenine phosphoribosyltransferase">
    <location>
        <begin position="1"/>
        <end position="172"/>
    </location>
</feature>
<dbReference type="EC" id="2.4.2.7" evidence="1"/>
<dbReference type="EMBL" id="CP000825">
    <property type="protein sequence ID" value="ABV51088.1"/>
    <property type="molecule type" value="Genomic_DNA"/>
</dbReference>
<dbReference type="RefSeq" id="WP_012008136.1">
    <property type="nucleotide sequence ID" value="NC_009840.1"/>
</dbReference>
<dbReference type="SMR" id="A8G657"/>
<dbReference type="STRING" id="93060.P9215_14751"/>
<dbReference type="KEGG" id="pmh:P9215_14751"/>
<dbReference type="eggNOG" id="COG0503">
    <property type="taxonomic scope" value="Bacteria"/>
</dbReference>
<dbReference type="HOGENOM" id="CLU_063339_3_3_3"/>
<dbReference type="OrthoDB" id="9803963at2"/>
<dbReference type="UniPathway" id="UPA00588">
    <property type="reaction ID" value="UER00646"/>
</dbReference>
<dbReference type="Proteomes" id="UP000002014">
    <property type="component" value="Chromosome"/>
</dbReference>
<dbReference type="GO" id="GO:0005737">
    <property type="term" value="C:cytoplasm"/>
    <property type="evidence" value="ECO:0007669"/>
    <property type="project" value="UniProtKB-SubCell"/>
</dbReference>
<dbReference type="GO" id="GO:0002055">
    <property type="term" value="F:adenine binding"/>
    <property type="evidence" value="ECO:0007669"/>
    <property type="project" value="TreeGrafter"/>
</dbReference>
<dbReference type="GO" id="GO:0003999">
    <property type="term" value="F:adenine phosphoribosyltransferase activity"/>
    <property type="evidence" value="ECO:0007669"/>
    <property type="project" value="UniProtKB-UniRule"/>
</dbReference>
<dbReference type="GO" id="GO:0016208">
    <property type="term" value="F:AMP binding"/>
    <property type="evidence" value="ECO:0007669"/>
    <property type="project" value="TreeGrafter"/>
</dbReference>
<dbReference type="GO" id="GO:0006168">
    <property type="term" value="P:adenine salvage"/>
    <property type="evidence" value="ECO:0007669"/>
    <property type="project" value="InterPro"/>
</dbReference>
<dbReference type="GO" id="GO:0044209">
    <property type="term" value="P:AMP salvage"/>
    <property type="evidence" value="ECO:0007669"/>
    <property type="project" value="UniProtKB-UniRule"/>
</dbReference>
<dbReference type="GO" id="GO:0006166">
    <property type="term" value="P:purine ribonucleoside salvage"/>
    <property type="evidence" value="ECO:0007669"/>
    <property type="project" value="UniProtKB-KW"/>
</dbReference>
<dbReference type="CDD" id="cd06223">
    <property type="entry name" value="PRTases_typeI"/>
    <property type="match status" value="1"/>
</dbReference>
<dbReference type="FunFam" id="3.40.50.2020:FF:000004">
    <property type="entry name" value="Adenine phosphoribosyltransferase"/>
    <property type="match status" value="1"/>
</dbReference>
<dbReference type="Gene3D" id="3.40.50.2020">
    <property type="match status" value="1"/>
</dbReference>
<dbReference type="HAMAP" id="MF_00004">
    <property type="entry name" value="Aden_phosphoribosyltr"/>
    <property type="match status" value="1"/>
</dbReference>
<dbReference type="InterPro" id="IPR005764">
    <property type="entry name" value="Ade_phspho_trans"/>
</dbReference>
<dbReference type="InterPro" id="IPR000836">
    <property type="entry name" value="PRibTrfase_dom"/>
</dbReference>
<dbReference type="InterPro" id="IPR029057">
    <property type="entry name" value="PRTase-like"/>
</dbReference>
<dbReference type="InterPro" id="IPR050054">
    <property type="entry name" value="UPRTase/APRTase"/>
</dbReference>
<dbReference type="NCBIfam" id="NF002636">
    <property type="entry name" value="PRK02304.1-5"/>
    <property type="match status" value="1"/>
</dbReference>
<dbReference type="PANTHER" id="PTHR32315">
    <property type="entry name" value="ADENINE PHOSPHORIBOSYLTRANSFERASE"/>
    <property type="match status" value="1"/>
</dbReference>
<dbReference type="PANTHER" id="PTHR32315:SF3">
    <property type="entry name" value="ADENINE PHOSPHORIBOSYLTRANSFERASE"/>
    <property type="match status" value="1"/>
</dbReference>
<dbReference type="Pfam" id="PF00156">
    <property type="entry name" value="Pribosyltran"/>
    <property type="match status" value="1"/>
</dbReference>
<dbReference type="SUPFAM" id="SSF53271">
    <property type="entry name" value="PRTase-like"/>
    <property type="match status" value="1"/>
</dbReference>
<evidence type="ECO:0000255" key="1">
    <source>
        <dbReference type="HAMAP-Rule" id="MF_00004"/>
    </source>
</evidence>
<proteinExistence type="inferred from homology"/>
<gene>
    <name evidence="1" type="primary">apt</name>
    <name type="ordered locus">P9215_14751</name>
</gene>
<protein>
    <recommendedName>
        <fullName evidence="1">Adenine phosphoribosyltransferase</fullName>
        <shortName evidence="1">APRT</shortName>
        <ecNumber evidence="1">2.4.2.7</ecNumber>
    </recommendedName>
</protein>
<reference key="1">
    <citation type="journal article" date="2007" name="PLoS Genet.">
        <title>Patterns and implications of gene gain and loss in the evolution of Prochlorococcus.</title>
        <authorList>
            <person name="Kettler G.C."/>
            <person name="Martiny A.C."/>
            <person name="Huang K."/>
            <person name="Zucker J."/>
            <person name="Coleman M.L."/>
            <person name="Rodrigue S."/>
            <person name="Chen F."/>
            <person name="Lapidus A."/>
            <person name="Ferriera S."/>
            <person name="Johnson J."/>
            <person name="Steglich C."/>
            <person name="Church G.M."/>
            <person name="Richardson P."/>
            <person name="Chisholm S.W."/>
        </authorList>
    </citation>
    <scope>NUCLEOTIDE SEQUENCE [LARGE SCALE GENOMIC DNA]</scope>
    <source>
        <strain>MIT 9215</strain>
    </source>
</reference>